<name>GPR1_YARLI</name>
<sequence length="270" mass="29438">MNTEIPDLEKQQIDHNSGSDDPQPIHDDMAPVSRIRSSGPNHEYIHIADQKFHRDDFYRAFGGTLNPGGAPQPSRKFGNPAPLGLSAFALTTLVFSLCTVQARGVPNPSIAVGLALFYGGVCQFAAGMWEFVQENTFGAAALTSYGGFWMSWAAIEMNAFGIKDSYNDPIEVQNAVGIYLFGWFIFTLMLTLCTLKSTVAFFGLFFMLMMTFLVLACANVTQHHGTAIGGGWLGIITAFFGFYNAYAGLANPGNSYIVPVPLDMPFVKKD</sequence>
<accession>P41943</accession>
<accession>Q96VC8</accession>
<gene>
    <name type="primary">GPR1</name>
    <name type="ordered locus">YALI0C23617g</name>
</gene>
<comment type="function">
    <text evidence="3">Plays a role in the adaptation of cell metabolism to the utilization of acetic acid, possibly by inhibiting an anion-transporting ATPase and affecting the plasma membrane H(+)-ATPase. May be indirectly involved in the repression of genes encoding glyoxylate cycle enzymes.</text>
</comment>
<comment type="subcellular location">
    <subcellularLocation>
        <location evidence="3">Membrane</location>
        <topology evidence="3">Multi-pass membrane protein</topology>
    </subcellularLocation>
</comment>
<comment type="induction">
    <text evidence="3">By acetic acid and ethanol.</text>
</comment>
<comment type="similarity">
    <text evidence="4">Belongs to the acetate uptake transporter (AceTr) (TC 2.A.96) family.</text>
</comment>
<evidence type="ECO:0000255" key="1"/>
<evidence type="ECO:0000256" key="2">
    <source>
        <dbReference type="SAM" id="MobiDB-lite"/>
    </source>
</evidence>
<evidence type="ECO:0000269" key="3">
    <source>
    </source>
</evidence>
<evidence type="ECO:0000305" key="4"/>
<protein>
    <recommendedName>
        <fullName>Glyoxylate pathway regulator</fullName>
    </recommendedName>
</protein>
<keyword id="KW-0472">Membrane</keyword>
<keyword id="KW-0597">Phosphoprotein</keyword>
<keyword id="KW-1185">Reference proteome</keyword>
<keyword id="KW-0812">Transmembrane</keyword>
<keyword id="KW-1133">Transmembrane helix</keyword>
<reference key="1">
    <citation type="journal article" date="1994" name="J. Bacteriol.">
        <title>Ylt1, a highly repetitive retrotransposon in the genome of the dimorphic fungus Yarrowia lipolytica.</title>
        <authorList>
            <person name="Schmid-Berger N."/>
            <person name="Schmid B."/>
            <person name="Barth G."/>
        </authorList>
    </citation>
    <scope>NUCLEOTIDE SEQUENCE [GENOMIC DNA]</scope>
    <source>
        <strain>B204-12C</strain>
    </source>
</reference>
<reference key="2">
    <citation type="submission" date="2001-07" db="EMBL/GenBank/DDBJ databases">
        <authorList>
            <person name="Barth G."/>
        </authorList>
    </citation>
    <scope>SEQUENCE REVISION TO 225-229; 244 AND 248</scope>
</reference>
<reference key="3">
    <citation type="journal article" date="2003" name="Microbiology">
        <title>Characterization, localization and functional analysis of Gpr1p, a protein affecting sensitivity to acetic acid in the yeast Yarrowia lipolytica.</title>
        <authorList>
            <person name="Augstein A."/>
            <person name="Barth K."/>
            <person name="Gentsch M."/>
            <person name="Kohlwein S.D."/>
            <person name="Barth G."/>
        </authorList>
    </citation>
    <scope>NUCLEOTIDE SEQUENCE [GENOMIC DNA]</scope>
    <scope>FUNCTION</scope>
    <scope>SUBCELLULAR LOCATION</scope>
    <scope>INDUCTION</scope>
    <scope>MUTAGENESIS OF TYR-58 AND SER-74</scope>
    <source>
        <strain>PO1d</strain>
    </source>
</reference>
<reference key="4">
    <citation type="journal article" date="2004" name="Nature">
        <title>Genome evolution in yeasts.</title>
        <authorList>
            <person name="Dujon B."/>
            <person name="Sherman D."/>
            <person name="Fischer G."/>
            <person name="Durrens P."/>
            <person name="Casaregola S."/>
            <person name="Lafontaine I."/>
            <person name="de Montigny J."/>
            <person name="Marck C."/>
            <person name="Neuveglise C."/>
            <person name="Talla E."/>
            <person name="Goffard N."/>
            <person name="Frangeul L."/>
            <person name="Aigle M."/>
            <person name="Anthouard V."/>
            <person name="Babour A."/>
            <person name="Barbe V."/>
            <person name="Barnay S."/>
            <person name="Blanchin S."/>
            <person name="Beckerich J.-M."/>
            <person name="Beyne E."/>
            <person name="Bleykasten C."/>
            <person name="Boisrame A."/>
            <person name="Boyer J."/>
            <person name="Cattolico L."/>
            <person name="Confanioleri F."/>
            <person name="de Daruvar A."/>
            <person name="Despons L."/>
            <person name="Fabre E."/>
            <person name="Fairhead C."/>
            <person name="Ferry-Dumazet H."/>
            <person name="Groppi A."/>
            <person name="Hantraye F."/>
            <person name="Hennequin C."/>
            <person name="Jauniaux N."/>
            <person name="Joyet P."/>
            <person name="Kachouri R."/>
            <person name="Kerrest A."/>
            <person name="Koszul R."/>
            <person name="Lemaire M."/>
            <person name="Lesur I."/>
            <person name="Ma L."/>
            <person name="Muller H."/>
            <person name="Nicaud J.-M."/>
            <person name="Nikolski M."/>
            <person name="Oztas S."/>
            <person name="Ozier-Kalogeropoulos O."/>
            <person name="Pellenz S."/>
            <person name="Potier S."/>
            <person name="Richard G.-F."/>
            <person name="Straub M.-L."/>
            <person name="Suleau A."/>
            <person name="Swennen D."/>
            <person name="Tekaia F."/>
            <person name="Wesolowski-Louvel M."/>
            <person name="Westhof E."/>
            <person name="Wirth B."/>
            <person name="Zeniou-Meyer M."/>
            <person name="Zivanovic Y."/>
            <person name="Bolotin-Fukuhara M."/>
            <person name="Thierry A."/>
            <person name="Bouchier C."/>
            <person name="Caudron B."/>
            <person name="Scarpelli C."/>
            <person name="Gaillardin C."/>
            <person name="Weissenbach J."/>
            <person name="Wincker P."/>
            <person name="Souciet J.-L."/>
        </authorList>
    </citation>
    <scope>NUCLEOTIDE SEQUENCE [LARGE SCALE GENOMIC DNA]</scope>
    <source>
        <strain>CLIB 122 / E 150</strain>
    </source>
</reference>
<dbReference type="EMBL" id="X74146">
    <property type="protein sequence ID" value="CAA52243.2"/>
    <property type="molecule type" value="Genomic_DNA"/>
</dbReference>
<dbReference type="EMBL" id="AJ313508">
    <property type="protein sequence ID" value="CAC44466.1"/>
    <property type="molecule type" value="Genomic_DNA"/>
</dbReference>
<dbReference type="EMBL" id="CR382129">
    <property type="protein sequence ID" value="CAG82510.1"/>
    <property type="molecule type" value="Genomic_DNA"/>
</dbReference>
<dbReference type="RefSeq" id="XP_502188.1">
    <property type="nucleotide sequence ID" value="XM_502188.1"/>
</dbReference>
<dbReference type="SMR" id="P41943"/>
<dbReference type="FunCoup" id="P41943">
    <property type="interactions" value="38"/>
</dbReference>
<dbReference type="STRING" id="284591.P41943"/>
<dbReference type="TCDB" id="2.A.96.1.2">
    <property type="family name" value="the acetate uptake transporter (acetr) family"/>
</dbReference>
<dbReference type="EnsemblFungi" id="CAG82510">
    <property type="protein sequence ID" value="CAG82510"/>
    <property type="gene ID" value="YALI0_C23617g"/>
</dbReference>
<dbReference type="KEGG" id="yli:2909559"/>
<dbReference type="VEuPathDB" id="FungiDB:YALI0_C23617g"/>
<dbReference type="HOGENOM" id="CLU_051062_0_0_1"/>
<dbReference type="InParanoid" id="P41943"/>
<dbReference type="OMA" id="WIEGPEP"/>
<dbReference type="OrthoDB" id="115324at4891"/>
<dbReference type="Proteomes" id="UP000001300">
    <property type="component" value="Chromosome C"/>
</dbReference>
<dbReference type="GO" id="GO:0005886">
    <property type="term" value="C:plasma membrane"/>
    <property type="evidence" value="ECO:0000318"/>
    <property type="project" value="GO_Central"/>
</dbReference>
<dbReference type="GO" id="GO:0015123">
    <property type="term" value="F:acetate transmembrane transporter activity"/>
    <property type="evidence" value="ECO:0000318"/>
    <property type="project" value="GO_Central"/>
</dbReference>
<dbReference type="InterPro" id="IPR051633">
    <property type="entry name" value="AceTr"/>
</dbReference>
<dbReference type="InterPro" id="IPR000791">
    <property type="entry name" value="Gpr1/Fun34/SatP-like"/>
</dbReference>
<dbReference type="InterPro" id="IPR047622">
    <property type="entry name" value="GPR1_FUN34_YAAH"/>
</dbReference>
<dbReference type="NCBIfam" id="NF038013">
    <property type="entry name" value="AceTr_1"/>
    <property type="match status" value="1"/>
</dbReference>
<dbReference type="PANTHER" id="PTHR31123">
    <property type="entry name" value="ACCUMULATION OF DYADS PROTEIN 2-RELATED"/>
    <property type="match status" value="1"/>
</dbReference>
<dbReference type="PANTHER" id="PTHR31123:SF1">
    <property type="entry name" value="ACCUMULATION OF DYADS PROTEIN 2-RELATED"/>
    <property type="match status" value="1"/>
</dbReference>
<dbReference type="Pfam" id="PF01184">
    <property type="entry name" value="Gpr1_Fun34_YaaH"/>
    <property type="match status" value="1"/>
</dbReference>
<dbReference type="PROSITE" id="PS01114">
    <property type="entry name" value="GPR1_FUN34_YAAH"/>
    <property type="match status" value="1"/>
</dbReference>
<organism>
    <name type="scientific">Yarrowia lipolytica (strain CLIB 122 / E 150)</name>
    <name type="common">Yeast</name>
    <name type="synonym">Candida lipolytica</name>
    <dbReference type="NCBI Taxonomy" id="284591"/>
    <lineage>
        <taxon>Eukaryota</taxon>
        <taxon>Fungi</taxon>
        <taxon>Dikarya</taxon>
        <taxon>Ascomycota</taxon>
        <taxon>Saccharomycotina</taxon>
        <taxon>Dipodascomycetes</taxon>
        <taxon>Dipodascales</taxon>
        <taxon>Dipodascales incertae sedis</taxon>
        <taxon>Yarrowia</taxon>
    </lineage>
</organism>
<feature type="chain" id="PRO_0000135702" description="Glyoxylate pathway regulator">
    <location>
        <begin position="1"/>
        <end position="270"/>
    </location>
</feature>
<feature type="transmembrane region" description="Helical" evidence="1">
    <location>
        <begin position="80"/>
        <end position="100"/>
    </location>
</feature>
<feature type="transmembrane region" description="Helical" evidence="1">
    <location>
        <begin position="109"/>
        <end position="129"/>
    </location>
</feature>
<feature type="transmembrane region" description="Helical" evidence="1">
    <location>
        <begin position="137"/>
        <end position="157"/>
    </location>
</feature>
<feature type="transmembrane region" description="Helical" evidence="1">
    <location>
        <begin position="175"/>
        <end position="195"/>
    </location>
</feature>
<feature type="transmembrane region" description="Helical" evidence="1">
    <location>
        <begin position="198"/>
        <end position="218"/>
    </location>
</feature>
<feature type="transmembrane region" description="Helical" evidence="1">
    <location>
        <begin position="227"/>
        <end position="247"/>
    </location>
</feature>
<feature type="region of interest" description="Disordered" evidence="2">
    <location>
        <begin position="1"/>
        <end position="33"/>
    </location>
</feature>
<feature type="modified residue" description="Phosphotyrosine" evidence="1">
    <location>
        <position position="58"/>
    </location>
</feature>
<feature type="modified residue" description="Phosphoserine" evidence="1">
    <location>
        <position position="74"/>
    </location>
</feature>
<feature type="mutagenesis site" description="No effect on sensitivity of cells to acetic acid." evidence="3">
    <original>Y</original>
    <variation>E</variation>
    <variation>F</variation>
    <location>
        <position position="58"/>
    </location>
</feature>
<feature type="mutagenesis site" description="No effect on sensitivity of cells to acetic acid." evidence="3">
    <original>S</original>
    <variation>A</variation>
    <variation>Q</variation>
    <location>
        <position position="74"/>
    </location>
</feature>
<feature type="mutagenesis site" description="No effect on sensitivity of cells to acetic acid." evidence="3">
    <original>S</original>
    <variation>H</variation>
    <variation>D</variation>
    <location>
        <position position="74"/>
    </location>
</feature>
<feature type="sequence conflict" description="In Ref. 1; CAA52243." evidence="4" ref="1">
    <original>G</original>
    <variation>D</variation>
    <location>
        <position position="248"/>
    </location>
</feature>
<proteinExistence type="evidence at protein level"/>